<gene>
    <name evidence="1" type="primary">aroC</name>
    <name type="ordered locus">SSO0307</name>
</gene>
<keyword id="KW-0028">Amino-acid biosynthesis</keyword>
<keyword id="KW-0057">Aromatic amino acid biosynthesis</keyword>
<keyword id="KW-0274">FAD</keyword>
<keyword id="KW-0285">Flavoprotein</keyword>
<keyword id="KW-0288">FMN</keyword>
<keyword id="KW-0456">Lyase</keyword>
<keyword id="KW-0521">NADP</keyword>
<keyword id="KW-1185">Reference proteome</keyword>
<accession>Q980I7</accession>
<feature type="chain" id="PRO_0000140697" description="Chorismate synthase">
    <location>
        <begin position="1"/>
        <end position="391"/>
    </location>
</feature>
<feature type="binding site" evidence="1">
    <location>
        <position position="48"/>
    </location>
    <ligand>
        <name>NADP(+)</name>
        <dbReference type="ChEBI" id="CHEBI:58349"/>
    </ligand>
</feature>
<feature type="binding site" evidence="1">
    <location>
        <begin position="126"/>
        <end position="128"/>
    </location>
    <ligand>
        <name>FMN</name>
        <dbReference type="ChEBI" id="CHEBI:58210"/>
    </ligand>
</feature>
<feature type="binding site" evidence="1">
    <location>
        <position position="286"/>
    </location>
    <ligand>
        <name>FMN</name>
        <dbReference type="ChEBI" id="CHEBI:58210"/>
    </ligand>
</feature>
<feature type="binding site" evidence="1">
    <location>
        <begin position="301"/>
        <end position="305"/>
    </location>
    <ligand>
        <name>FMN</name>
        <dbReference type="ChEBI" id="CHEBI:58210"/>
    </ligand>
</feature>
<feature type="binding site" evidence="1">
    <location>
        <position position="328"/>
    </location>
    <ligand>
        <name>FMN</name>
        <dbReference type="ChEBI" id="CHEBI:58210"/>
    </ligand>
</feature>
<organism>
    <name type="scientific">Saccharolobus solfataricus (strain ATCC 35092 / DSM 1617 / JCM 11322 / P2)</name>
    <name type="common">Sulfolobus solfataricus</name>
    <dbReference type="NCBI Taxonomy" id="273057"/>
    <lineage>
        <taxon>Archaea</taxon>
        <taxon>Thermoproteota</taxon>
        <taxon>Thermoprotei</taxon>
        <taxon>Sulfolobales</taxon>
        <taxon>Sulfolobaceae</taxon>
        <taxon>Saccharolobus</taxon>
    </lineage>
</organism>
<protein>
    <recommendedName>
        <fullName evidence="1">Chorismate synthase</fullName>
        <shortName evidence="1">CS</shortName>
        <ecNumber evidence="1">4.2.3.5</ecNumber>
    </recommendedName>
    <alternativeName>
        <fullName evidence="1">5-enolpyruvylshikimate-3-phosphate phospholyase</fullName>
    </alternativeName>
</protein>
<comment type="function">
    <text evidence="1">Catalyzes the anti-1,4-elimination of the C-3 phosphate and the C-6 proR hydrogen from 5-enolpyruvylshikimate-3-phosphate (EPSP) to yield chorismate, which is the branch point compound that serves as the starting substrate for the three terminal pathways of aromatic amino acid biosynthesis. This reaction introduces a second double bond into the aromatic ring system.</text>
</comment>
<comment type="catalytic activity">
    <reaction evidence="1">
        <text>5-O-(1-carboxyvinyl)-3-phosphoshikimate = chorismate + phosphate</text>
        <dbReference type="Rhea" id="RHEA:21020"/>
        <dbReference type="ChEBI" id="CHEBI:29748"/>
        <dbReference type="ChEBI" id="CHEBI:43474"/>
        <dbReference type="ChEBI" id="CHEBI:57701"/>
        <dbReference type="EC" id="4.2.3.5"/>
    </reaction>
</comment>
<comment type="cofactor">
    <cofactor evidence="1">
        <name>FMNH2</name>
        <dbReference type="ChEBI" id="CHEBI:57618"/>
    </cofactor>
    <text evidence="1">Reduced FMN (FMNH(2)).</text>
</comment>
<comment type="pathway">
    <text evidence="1">Metabolic intermediate biosynthesis; chorismate biosynthesis; chorismate from D-erythrose 4-phosphate and phosphoenolpyruvate: step 7/7.</text>
</comment>
<comment type="similarity">
    <text evidence="1">Belongs to the chorismate synthase family.</text>
</comment>
<evidence type="ECO:0000255" key="1">
    <source>
        <dbReference type="HAMAP-Rule" id="MF_00300"/>
    </source>
</evidence>
<name>AROC_SACS2</name>
<reference key="1">
    <citation type="journal article" date="2001" name="Proc. Natl. Acad. Sci. U.S.A.">
        <title>The complete genome of the crenarchaeon Sulfolobus solfataricus P2.</title>
        <authorList>
            <person name="She Q."/>
            <person name="Singh R.K."/>
            <person name="Confalonieri F."/>
            <person name="Zivanovic Y."/>
            <person name="Allard G."/>
            <person name="Awayez M.J."/>
            <person name="Chan-Weiher C.C.-Y."/>
            <person name="Clausen I.G."/>
            <person name="Curtis B.A."/>
            <person name="De Moors A."/>
            <person name="Erauso G."/>
            <person name="Fletcher C."/>
            <person name="Gordon P.M.K."/>
            <person name="Heikamp-de Jong I."/>
            <person name="Jeffries A.C."/>
            <person name="Kozera C.J."/>
            <person name="Medina N."/>
            <person name="Peng X."/>
            <person name="Thi-Ngoc H.P."/>
            <person name="Redder P."/>
            <person name="Schenk M.E."/>
            <person name="Theriault C."/>
            <person name="Tolstrup N."/>
            <person name="Charlebois R.L."/>
            <person name="Doolittle W.F."/>
            <person name="Duguet M."/>
            <person name="Gaasterland T."/>
            <person name="Garrett R.A."/>
            <person name="Ragan M.A."/>
            <person name="Sensen C.W."/>
            <person name="Van der Oost J."/>
        </authorList>
    </citation>
    <scope>NUCLEOTIDE SEQUENCE [LARGE SCALE GENOMIC DNA]</scope>
    <source>
        <strain>ATCC 35092 / DSM 1617 / JCM 11322 / P2</strain>
    </source>
</reference>
<dbReference type="EC" id="4.2.3.5" evidence="1"/>
<dbReference type="EMBL" id="AE006641">
    <property type="protein sequence ID" value="AAK40644.1"/>
    <property type="molecule type" value="Genomic_DNA"/>
</dbReference>
<dbReference type="PIR" id="E90173">
    <property type="entry name" value="E90173"/>
</dbReference>
<dbReference type="RefSeq" id="WP_009990599.1">
    <property type="nucleotide sequence ID" value="NC_002754.1"/>
</dbReference>
<dbReference type="SMR" id="Q980I7"/>
<dbReference type="FunCoup" id="Q980I7">
    <property type="interactions" value="167"/>
</dbReference>
<dbReference type="STRING" id="273057.SSO0307"/>
<dbReference type="PaxDb" id="273057-SSO0307"/>
<dbReference type="EnsemblBacteria" id="AAK40644">
    <property type="protein sequence ID" value="AAK40644"/>
    <property type="gene ID" value="SSO0307"/>
</dbReference>
<dbReference type="GeneID" id="44129280"/>
<dbReference type="KEGG" id="sso:SSO0307"/>
<dbReference type="PATRIC" id="fig|273057.12.peg.300"/>
<dbReference type="eggNOG" id="arCOG04133">
    <property type="taxonomic scope" value="Archaea"/>
</dbReference>
<dbReference type="HOGENOM" id="CLU_034547_0_0_2"/>
<dbReference type="InParanoid" id="Q980I7"/>
<dbReference type="PhylomeDB" id="Q980I7"/>
<dbReference type="UniPathway" id="UPA00053">
    <property type="reaction ID" value="UER00090"/>
</dbReference>
<dbReference type="Proteomes" id="UP000001974">
    <property type="component" value="Chromosome"/>
</dbReference>
<dbReference type="GO" id="GO:0005829">
    <property type="term" value="C:cytosol"/>
    <property type="evidence" value="ECO:0000318"/>
    <property type="project" value="GO_Central"/>
</dbReference>
<dbReference type="GO" id="GO:0004107">
    <property type="term" value="F:chorismate synthase activity"/>
    <property type="evidence" value="ECO:0000318"/>
    <property type="project" value="GO_Central"/>
</dbReference>
<dbReference type="GO" id="GO:0010181">
    <property type="term" value="F:FMN binding"/>
    <property type="evidence" value="ECO:0000318"/>
    <property type="project" value="GO_Central"/>
</dbReference>
<dbReference type="GO" id="GO:0008652">
    <property type="term" value="P:amino acid biosynthetic process"/>
    <property type="evidence" value="ECO:0007669"/>
    <property type="project" value="UniProtKB-KW"/>
</dbReference>
<dbReference type="GO" id="GO:0009073">
    <property type="term" value="P:aromatic amino acid family biosynthetic process"/>
    <property type="evidence" value="ECO:0000318"/>
    <property type="project" value="GO_Central"/>
</dbReference>
<dbReference type="GO" id="GO:0009423">
    <property type="term" value="P:chorismate biosynthetic process"/>
    <property type="evidence" value="ECO:0000318"/>
    <property type="project" value="GO_Central"/>
</dbReference>
<dbReference type="CDD" id="cd07304">
    <property type="entry name" value="Chorismate_synthase"/>
    <property type="match status" value="1"/>
</dbReference>
<dbReference type="FunFam" id="3.60.150.10:FF:000002">
    <property type="entry name" value="Chorismate synthase"/>
    <property type="match status" value="1"/>
</dbReference>
<dbReference type="Gene3D" id="3.60.150.10">
    <property type="entry name" value="Chorismate synthase AroC"/>
    <property type="match status" value="1"/>
</dbReference>
<dbReference type="HAMAP" id="MF_00300">
    <property type="entry name" value="Chorismate_synth"/>
    <property type="match status" value="1"/>
</dbReference>
<dbReference type="InterPro" id="IPR000453">
    <property type="entry name" value="Chorismate_synth"/>
</dbReference>
<dbReference type="InterPro" id="IPR035904">
    <property type="entry name" value="Chorismate_synth_AroC_sf"/>
</dbReference>
<dbReference type="InterPro" id="IPR020541">
    <property type="entry name" value="Chorismate_synthase_CS"/>
</dbReference>
<dbReference type="NCBIfam" id="TIGR00033">
    <property type="entry name" value="aroC"/>
    <property type="match status" value="1"/>
</dbReference>
<dbReference type="NCBIfam" id="NF003793">
    <property type="entry name" value="PRK05382.1"/>
    <property type="match status" value="1"/>
</dbReference>
<dbReference type="PANTHER" id="PTHR21085">
    <property type="entry name" value="CHORISMATE SYNTHASE"/>
    <property type="match status" value="1"/>
</dbReference>
<dbReference type="PANTHER" id="PTHR21085:SF0">
    <property type="entry name" value="CHORISMATE SYNTHASE"/>
    <property type="match status" value="1"/>
</dbReference>
<dbReference type="Pfam" id="PF01264">
    <property type="entry name" value="Chorismate_synt"/>
    <property type="match status" value="1"/>
</dbReference>
<dbReference type="PIRSF" id="PIRSF001456">
    <property type="entry name" value="Chorismate_synth"/>
    <property type="match status" value="1"/>
</dbReference>
<dbReference type="SUPFAM" id="SSF103263">
    <property type="entry name" value="Chorismate synthase, AroC"/>
    <property type="match status" value="1"/>
</dbReference>
<dbReference type="PROSITE" id="PS00787">
    <property type="entry name" value="CHORISMATE_SYNTHASE_1"/>
    <property type="match status" value="1"/>
</dbReference>
<dbReference type="PROSITE" id="PS00788">
    <property type="entry name" value="CHORISMATE_SYNTHASE_2"/>
    <property type="match status" value="1"/>
</dbReference>
<dbReference type="PROSITE" id="PS00789">
    <property type="entry name" value="CHORISMATE_SYNTHASE_3"/>
    <property type="match status" value="1"/>
</dbReference>
<proteinExistence type="inferred from homology"/>
<sequence>MPGNSFGKLFRITTFGESHGPAVGVVIDGVPAGLPLTVEDIKFELEFRRPGRLYVSGRREKDEPEILSGIFNNRTTGSPIAVIVRNTDVISSFYDEIKYKPRPGHADLPFIMKYGYENWDYRGGGRASARETVSRVIAGAVAKKLLMLTDTWIAGHLRSLGPEELSEEVTFEEVLCSKYSPVRASKKDLEEKYEALIKKATQEGDSYGGIAEVIAKNPPIGLGEPVFDKMKAELAKAIMSIPAVMGFEYGLGFIASKMKGSEANDEIIRKNNRIGWKYNYAGGILGGLTNGEDLIVRCAFKPTSSIRKPQKTIDLRNLEESYISVIGRHDPAVAIRGVTVVESMVALTIVDHAMRAGAIPLVKLTEDQANTIQQRWERYVKSCKPMEESQS</sequence>